<feature type="chain" id="PRO_1000066679" description="Acyl carrier protein">
    <location>
        <begin position="1"/>
        <end position="77"/>
    </location>
</feature>
<feature type="domain" description="Carrier" evidence="2">
    <location>
        <begin position="2"/>
        <end position="77"/>
    </location>
</feature>
<feature type="modified residue" description="O-(pantetheine 4'-phosphoryl)serine" evidence="2">
    <location>
        <position position="37"/>
    </location>
</feature>
<sequence length="77" mass="8405">MSDIADRVKKIVVEHLGVEEEKVTENASFIDDLGADSLDTVELVMAFEEEFGIEIPDDAAETIQTFGDAVKFISEAA</sequence>
<reference key="1">
    <citation type="submission" date="2007-04" db="EMBL/GenBank/DDBJ databases">
        <title>Complete sequence of chromosome of Rhodobacter sphaeroides ATCC 17025.</title>
        <authorList>
            <consortium name="US DOE Joint Genome Institute"/>
            <person name="Copeland A."/>
            <person name="Lucas S."/>
            <person name="Lapidus A."/>
            <person name="Barry K."/>
            <person name="Detter J.C."/>
            <person name="Glavina del Rio T."/>
            <person name="Hammon N."/>
            <person name="Israni S."/>
            <person name="Dalin E."/>
            <person name="Tice H."/>
            <person name="Pitluck S."/>
            <person name="Chertkov O."/>
            <person name="Brettin T."/>
            <person name="Bruce D."/>
            <person name="Han C."/>
            <person name="Schmutz J."/>
            <person name="Larimer F."/>
            <person name="Land M."/>
            <person name="Hauser L."/>
            <person name="Kyrpides N."/>
            <person name="Kim E."/>
            <person name="Richardson P."/>
            <person name="Mackenzie C."/>
            <person name="Choudhary M."/>
            <person name="Donohue T.J."/>
            <person name="Kaplan S."/>
        </authorList>
    </citation>
    <scope>NUCLEOTIDE SEQUENCE [LARGE SCALE GENOMIC DNA]</scope>
    <source>
        <strain>ATCC 17025 / ATH 2.4.3</strain>
    </source>
</reference>
<gene>
    <name evidence="1" type="primary">acpP</name>
    <name type="ordered locus">Rsph17025_1070</name>
</gene>
<accession>A4WRF7</accession>
<proteinExistence type="inferred from homology"/>
<organism>
    <name type="scientific">Cereibacter sphaeroides (strain ATCC 17025 / ATH 2.4.3)</name>
    <name type="common">Rhodobacter sphaeroides</name>
    <dbReference type="NCBI Taxonomy" id="349102"/>
    <lineage>
        <taxon>Bacteria</taxon>
        <taxon>Pseudomonadati</taxon>
        <taxon>Pseudomonadota</taxon>
        <taxon>Alphaproteobacteria</taxon>
        <taxon>Rhodobacterales</taxon>
        <taxon>Paracoccaceae</taxon>
        <taxon>Cereibacter</taxon>
    </lineage>
</organism>
<keyword id="KW-0963">Cytoplasm</keyword>
<keyword id="KW-0275">Fatty acid biosynthesis</keyword>
<keyword id="KW-0276">Fatty acid metabolism</keyword>
<keyword id="KW-0444">Lipid biosynthesis</keyword>
<keyword id="KW-0443">Lipid metabolism</keyword>
<keyword id="KW-0596">Phosphopantetheine</keyword>
<keyword id="KW-0597">Phosphoprotein</keyword>
<evidence type="ECO:0000255" key="1">
    <source>
        <dbReference type="HAMAP-Rule" id="MF_01217"/>
    </source>
</evidence>
<evidence type="ECO:0000255" key="2">
    <source>
        <dbReference type="PROSITE-ProRule" id="PRU00258"/>
    </source>
</evidence>
<protein>
    <recommendedName>
        <fullName evidence="1">Acyl carrier protein</fullName>
        <shortName evidence="1">ACP</shortName>
    </recommendedName>
</protein>
<name>ACP_CERS5</name>
<dbReference type="EMBL" id="CP000661">
    <property type="protein sequence ID" value="ABP69971.1"/>
    <property type="molecule type" value="Genomic_DNA"/>
</dbReference>
<dbReference type="SMR" id="A4WRF7"/>
<dbReference type="STRING" id="349102.Rsph17025_1070"/>
<dbReference type="KEGG" id="rsq:Rsph17025_1070"/>
<dbReference type="eggNOG" id="COG0236">
    <property type="taxonomic scope" value="Bacteria"/>
</dbReference>
<dbReference type="HOGENOM" id="CLU_108696_5_1_5"/>
<dbReference type="BioCyc" id="RSPH349102:G1G8M-1097-MONOMER"/>
<dbReference type="UniPathway" id="UPA00094"/>
<dbReference type="GO" id="GO:0005829">
    <property type="term" value="C:cytosol"/>
    <property type="evidence" value="ECO:0007669"/>
    <property type="project" value="TreeGrafter"/>
</dbReference>
<dbReference type="GO" id="GO:0016020">
    <property type="term" value="C:membrane"/>
    <property type="evidence" value="ECO:0007669"/>
    <property type="project" value="GOC"/>
</dbReference>
<dbReference type="GO" id="GO:0000035">
    <property type="term" value="F:acyl binding"/>
    <property type="evidence" value="ECO:0007669"/>
    <property type="project" value="TreeGrafter"/>
</dbReference>
<dbReference type="GO" id="GO:0000036">
    <property type="term" value="F:acyl carrier activity"/>
    <property type="evidence" value="ECO:0007669"/>
    <property type="project" value="UniProtKB-UniRule"/>
</dbReference>
<dbReference type="GO" id="GO:0009245">
    <property type="term" value="P:lipid A biosynthetic process"/>
    <property type="evidence" value="ECO:0007669"/>
    <property type="project" value="TreeGrafter"/>
</dbReference>
<dbReference type="FunFam" id="1.10.1200.10:FF:000001">
    <property type="entry name" value="Acyl carrier protein"/>
    <property type="match status" value="1"/>
</dbReference>
<dbReference type="Gene3D" id="1.10.1200.10">
    <property type="entry name" value="ACP-like"/>
    <property type="match status" value="1"/>
</dbReference>
<dbReference type="HAMAP" id="MF_01217">
    <property type="entry name" value="Acyl_carrier"/>
    <property type="match status" value="1"/>
</dbReference>
<dbReference type="InterPro" id="IPR003231">
    <property type="entry name" value="ACP"/>
</dbReference>
<dbReference type="InterPro" id="IPR036736">
    <property type="entry name" value="ACP-like_sf"/>
</dbReference>
<dbReference type="InterPro" id="IPR009081">
    <property type="entry name" value="PP-bd_ACP"/>
</dbReference>
<dbReference type="InterPro" id="IPR006162">
    <property type="entry name" value="Ppantetheine_attach_site"/>
</dbReference>
<dbReference type="NCBIfam" id="TIGR00517">
    <property type="entry name" value="acyl_carrier"/>
    <property type="match status" value="1"/>
</dbReference>
<dbReference type="NCBIfam" id="NF002148">
    <property type="entry name" value="PRK00982.1-2"/>
    <property type="match status" value="1"/>
</dbReference>
<dbReference type="NCBIfam" id="NF002149">
    <property type="entry name" value="PRK00982.1-3"/>
    <property type="match status" value="1"/>
</dbReference>
<dbReference type="NCBIfam" id="NF002150">
    <property type="entry name" value="PRK00982.1-4"/>
    <property type="match status" value="1"/>
</dbReference>
<dbReference type="NCBIfam" id="NF002151">
    <property type="entry name" value="PRK00982.1-5"/>
    <property type="match status" value="1"/>
</dbReference>
<dbReference type="PANTHER" id="PTHR20863">
    <property type="entry name" value="ACYL CARRIER PROTEIN"/>
    <property type="match status" value="1"/>
</dbReference>
<dbReference type="PANTHER" id="PTHR20863:SF76">
    <property type="entry name" value="CARRIER DOMAIN-CONTAINING PROTEIN"/>
    <property type="match status" value="1"/>
</dbReference>
<dbReference type="Pfam" id="PF00550">
    <property type="entry name" value="PP-binding"/>
    <property type="match status" value="1"/>
</dbReference>
<dbReference type="SUPFAM" id="SSF47336">
    <property type="entry name" value="ACP-like"/>
    <property type="match status" value="1"/>
</dbReference>
<dbReference type="PROSITE" id="PS50075">
    <property type="entry name" value="CARRIER"/>
    <property type="match status" value="1"/>
</dbReference>
<dbReference type="PROSITE" id="PS00012">
    <property type="entry name" value="PHOSPHOPANTETHEINE"/>
    <property type="match status" value="1"/>
</dbReference>
<comment type="function">
    <text evidence="1">Carrier of the growing fatty acid chain in fatty acid biosynthesis.</text>
</comment>
<comment type="pathway">
    <text evidence="1">Lipid metabolism; fatty acid biosynthesis.</text>
</comment>
<comment type="subcellular location">
    <subcellularLocation>
        <location evidence="1">Cytoplasm</location>
    </subcellularLocation>
</comment>
<comment type="PTM">
    <text evidence="1">4'-phosphopantetheine is transferred from CoA to a specific serine of apo-ACP by AcpS. This modification is essential for activity because fatty acids are bound in thioester linkage to the sulfhydryl of the prosthetic group.</text>
</comment>
<comment type="similarity">
    <text evidence="1">Belongs to the acyl carrier protein (ACP) family.</text>
</comment>